<proteinExistence type="evidence at protein level"/>
<accession>Q7A2T0</accession>
<sequence>MKFNKVKLVIHACVLLFIIISIALIFHRLQTKTHSIDPIHKETKLSDNEKYLVDRNKEKVAPSKLKEVYNSKDPKYKKIDKYLQSSLFNGSVAIYENGKLKMSKGYGYQDFEKGIKNTPNTMFLIGSAQKFSTGLLLKQLEEEHKININDPVSKYLPWFKTSKPIPLKDLMLHQSGLYKYKSSKDYKNLDQAVKAIQKRGIDPKKYKKHMYNDGNYLVLAKVIEEVTGKSYAENYYTKIGDPLKLQHTAFYDEQPFKKYLAKGYAYNSTGLSFLRPNILDQYYGAGNLYMTPTDMGKLITQIQQYKLFSPKITNPLLHEFGTKQYPDEYRYGFYAKPTLNRLNGGFFGQVFTVYYNDKYVVVLALNVKGNNEVRIKHIYNDILKQNKPYNTKGVIVQ</sequence>
<organism>
    <name type="scientific">Staphylococcus aureus (strain Mu50 / ATCC 700699)</name>
    <dbReference type="NCBI Taxonomy" id="158878"/>
    <lineage>
        <taxon>Bacteria</taxon>
        <taxon>Bacillati</taxon>
        <taxon>Bacillota</taxon>
        <taxon>Bacilli</taxon>
        <taxon>Bacillales</taxon>
        <taxon>Staphylococcaceae</taxon>
        <taxon>Staphylococcus</taxon>
    </lineage>
</organism>
<keyword id="KW-0046">Antibiotic resistance</keyword>
<keyword id="KW-1003">Cell membrane</keyword>
<keyword id="KW-0961">Cell wall biogenesis/degradation</keyword>
<keyword id="KW-0378">Hydrolase</keyword>
<keyword id="KW-0472">Membrane</keyword>
<keyword id="KW-0732">Signal</keyword>
<gene>
    <name type="primary">fmtA</name>
    <name type="synonym">fmt</name>
    <name type="ordered locus">SAV1057</name>
</gene>
<reference key="1">
    <citation type="journal article" date="2001" name="Lancet">
        <title>Whole genome sequencing of meticillin-resistant Staphylococcus aureus.</title>
        <authorList>
            <person name="Kuroda M."/>
            <person name="Ohta T."/>
            <person name="Uchiyama I."/>
            <person name="Baba T."/>
            <person name="Yuzawa H."/>
            <person name="Kobayashi I."/>
            <person name="Cui L."/>
            <person name="Oguchi A."/>
            <person name="Aoki K."/>
            <person name="Nagai Y."/>
            <person name="Lian J.-Q."/>
            <person name="Ito T."/>
            <person name="Kanamori M."/>
            <person name="Matsumaru H."/>
            <person name="Maruyama A."/>
            <person name="Murakami H."/>
            <person name="Hosoyama A."/>
            <person name="Mizutani-Ui Y."/>
            <person name="Takahashi N.K."/>
            <person name="Sawano T."/>
            <person name="Inoue R."/>
            <person name="Kaito C."/>
            <person name="Sekimizu K."/>
            <person name="Hirakawa H."/>
            <person name="Kuhara S."/>
            <person name="Goto S."/>
            <person name="Yabuzaki J."/>
            <person name="Kanehisa M."/>
            <person name="Yamashita A."/>
            <person name="Oshima K."/>
            <person name="Furuya K."/>
            <person name="Yoshino C."/>
            <person name="Shiba T."/>
            <person name="Hattori M."/>
            <person name="Ogasawara N."/>
            <person name="Hayashi H."/>
            <person name="Hiramatsu K."/>
        </authorList>
    </citation>
    <scope>NUCLEOTIDE SEQUENCE [LARGE SCALE GENOMIC DNA]</scope>
    <source>
        <strain>Mu50 / ATCC 700699</strain>
    </source>
</reference>
<reference key="2">
    <citation type="journal article" date="2012" name="Antimicrob. Agents Chemother.">
        <title>Dual roles of FmtA in Staphylococcus aureus cell wall biosynthesis and autolysis.</title>
        <authorList>
            <person name="Qamar A."/>
            <person name="Golemi-Kotra D."/>
        </authorList>
    </citation>
    <scope>FUNCTION</scope>
    <source>
        <strain>Mu50 / ATCC 700699</strain>
    </source>
</reference>
<reference key="3">
    <citation type="journal article" date="2016" name="MBio">
        <title>The Staphylococcus aureus methicillin resistance factor FmtA is a D-amino esterase that acts on teichoic acids.</title>
        <authorList>
            <person name="Rahman M.M."/>
            <person name="Hunter H.N."/>
            <person name="Prova S."/>
            <person name="Verma V."/>
            <person name="Qamar A."/>
            <person name="Golemi-Kotra D."/>
        </authorList>
    </citation>
    <scope>FUNCTION</scope>
    <scope>CATALYTIC ACTIVITY</scope>
    <source>
        <strain>Mu50 / ATCC 700699</strain>
    </source>
</reference>
<dbReference type="EC" id="3.1.1.103" evidence="4"/>
<dbReference type="EMBL" id="BA000017">
    <property type="protein sequence ID" value="BAB57219.1"/>
    <property type="molecule type" value="Genomic_DNA"/>
</dbReference>
<dbReference type="RefSeq" id="WP_000671245.1">
    <property type="nucleotide sequence ID" value="NC_002758.2"/>
</dbReference>
<dbReference type="SMR" id="Q7A2T0"/>
<dbReference type="MEROPS" id="S12.006"/>
<dbReference type="KEGG" id="sav:SAV1057"/>
<dbReference type="HOGENOM" id="CLU_020027_0_0_9"/>
<dbReference type="PhylomeDB" id="Q7A2T0"/>
<dbReference type="Proteomes" id="UP000002481">
    <property type="component" value="Chromosome"/>
</dbReference>
<dbReference type="GO" id="GO:0005886">
    <property type="term" value="C:plasma membrane"/>
    <property type="evidence" value="ECO:0007669"/>
    <property type="project" value="UniProtKB-SubCell"/>
</dbReference>
<dbReference type="GO" id="GO:0016787">
    <property type="term" value="F:hydrolase activity"/>
    <property type="evidence" value="ECO:0007669"/>
    <property type="project" value="UniProtKB-KW"/>
</dbReference>
<dbReference type="GO" id="GO:0071555">
    <property type="term" value="P:cell wall organization"/>
    <property type="evidence" value="ECO:0007669"/>
    <property type="project" value="UniProtKB-KW"/>
</dbReference>
<dbReference type="GO" id="GO:0046677">
    <property type="term" value="P:response to antibiotic"/>
    <property type="evidence" value="ECO:0007669"/>
    <property type="project" value="UniProtKB-KW"/>
</dbReference>
<dbReference type="FunFam" id="3.40.710.10:FF:000040">
    <property type="entry name" value="Methicillin resistance protein FmtA"/>
    <property type="match status" value="1"/>
</dbReference>
<dbReference type="Gene3D" id="3.40.710.10">
    <property type="entry name" value="DD-peptidase/beta-lactamase superfamily"/>
    <property type="match status" value="1"/>
</dbReference>
<dbReference type="InterPro" id="IPR050491">
    <property type="entry name" value="Bact_CellWall_Synth/Modif"/>
</dbReference>
<dbReference type="InterPro" id="IPR001466">
    <property type="entry name" value="Beta-lactam-related"/>
</dbReference>
<dbReference type="InterPro" id="IPR012338">
    <property type="entry name" value="Beta-lactam/transpept-like"/>
</dbReference>
<dbReference type="PANTHER" id="PTHR46825">
    <property type="entry name" value="D-ALANYL-D-ALANINE-CARBOXYPEPTIDASE/ENDOPEPTIDASE AMPH"/>
    <property type="match status" value="1"/>
</dbReference>
<dbReference type="PANTHER" id="PTHR46825:SF11">
    <property type="entry name" value="PENICILLIN-BINDING PROTEIN 4"/>
    <property type="match status" value="1"/>
</dbReference>
<dbReference type="Pfam" id="PF00144">
    <property type="entry name" value="Beta-lactamase"/>
    <property type="match status" value="1"/>
</dbReference>
<dbReference type="SUPFAM" id="SSF56601">
    <property type="entry name" value="beta-lactamase/transpeptidase-like"/>
    <property type="match status" value="1"/>
</dbReference>
<comment type="function">
    <text evidence="3 4">Catalyzes the liberation of D-alanyl moieties present on wall teichoic acid (WTA) and lipoteichoic acid (LTA) (PubMed:26861022). Affects the methicillin resistance level and autolysis in the presence of Triton X-100 as well as the cell wall structure (PubMed:22564846).</text>
</comment>
<comment type="catalytic activity">
    <reaction evidence="4">
        <text>[(4-D-Ala)-(2-GlcNAc)-Rib-ol-P]n-[Gro-P]m-beta-D-ManNAc-(1-&gt;4)-alpha-D-GlcNAc-P-peptidoglycan + n H2O = [(2-GlcNAc)-Rib-ol-P]n-[Gro-P]m-beta-D-ManNAc-(1-&gt;4)-alpha-D-GlcNAc-P-peptidoglycan + n D-alanine.</text>
        <dbReference type="EC" id="3.1.1.103"/>
    </reaction>
</comment>
<comment type="subcellular location">
    <subcellularLocation>
        <location evidence="1">Cell membrane</location>
        <topology evidence="1">Peripheral membrane protein</topology>
    </subcellularLocation>
</comment>
<evidence type="ECO:0000250" key="1"/>
<evidence type="ECO:0000255" key="2"/>
<evidence type="ECO:0000269" key="3">
    <source>
    </source>
</evidence>
<evidence type="ECO:0000269" key="4">
    <source>
    </source>
</evidence>
<feature type="signal peptide" evidence="2">
    <location>
        <begin position="1"/>
        <end position="23"/>
    </location>
</feature>
<feature type="chain" id="PRO_0000043100" description="Teichoic acid D-alanine hydrolase">
    <location>
        <begin position="24"/>
        <end position="397"/>
    </location>
</feature>
<name>FMTA_STAAM</name>
<protein>
    <recommendedName>
        <fullName>Teichoic acid D-alanine hydrolase</fullName>
        <ecNumber evidence="4">3.1.1.103</ecNumber>
    </recommendedName>
    <alternativeName>
        <fullName>Teichoic acid D-alanine esterase</fullName>
    </alternativeName>
</protein>